<dbReference type="EMBL" id="AF011360">
    <property type="protein sequence ID" value="AAC99483.1"/>
    <property type="molecule type" value="mRNA"/>
</dbReference>
<dbReference type="EMBL" id="AC102499">
    <property type="status" value="NOT_ANNOTATED_CDS"/>
    <property type="molecule type" value="Genomic_DNA"/>
</dbReference>
<dbReference type="EMBL" id="AC113050">
    <property type="status" value="NOT_ANNOTATED_CDS"/>
    <property type="molecule type" value="Genomic_DNA"/>
</dbReference>
<dbReference type="EMBL" id="AC117693">
    <property type="status" value="NOT_ANNOTATED_CDS"/>
    <property type="molecule type" value="Genomic_DNA"/>
</dbReference>
<dbReference type="EMBL" id="AC117734">
    <property type="status" value="NOT_ANNOTATED_CDS"/>
    <property type="molecule type" value="Genomic_DNA"/>
</dbReference>
<dbReference type="EMBL" id="AC159973">
    <property type="status" value="NOT_ANNOTATED_CDS"/>
    <property type="molecule type" value="Genomic_DNA"/>
</dbReference>
<dbReference type="CCDS" id="CCDS15546.1"/>
<dbReference type="RefSeq" id="NP_036010.2">
    <property type="nucleotide sequence ID" value="NM_011880.3"/>
</dbReference>
<dbReference type="SMR" id="O54829"/>
<dbReference type="BioGRID" id="204852">
    <property type="interactions" value="7"/>
</dbReference>
<dbReference type="FunCoup" id="O54829">
    <property type="interactions" value="868"/>
</dbReference>
<dbReference type="STRING" id="10090.ENSMUSP00000141380"/>
<dbReference type="GlyGen" id="O54829">
    <property type="glycosylation" value="2 sites, 1 N-linked glycan (1 site), 1 O-linked glycan (1 site)"/>
</dbReference>
<dbReference type="iPTMnet" id="O54829"/>
<dbReference type="PhosphoSitePlus" id="O54829"/>
<dbReference type="SwissPalm" id="O54829"/>
<dbReference type="PaxDb" id="10090-ENSMUSP00000027812"/>
<dbReference type="PeptideAtlas" id="O54829"/>
<dbReference type="ProteomicsDB" id="254959"/>
<dbReference type="Antibodypedia" id="620">
    <property type="antibodies" value="232 antibodies from 31 providers"/>
</dbReference>
<dbReference type="DNASU" id="24012"/>
<dbReference type="Ensembl" id="ENSMUST00000027812.11">
    <property type="protein sequence ID" value="ENSMUSP00000027812.6"/>
    <property type="gene ID" value="ENSMUSG00000026527.14"/>
</dbReference>
<dbReference type="Ensembl" id="ENSMUST00000192227.6">
    <property type="protein sequence ID" value="ENSMUSP00000142278.2"/>
    <property type="gene ID" value="ENSMUSG00000026527.14"/>
</dbReference>
<dbReference type="GeneID" id="24012"/>
<dbReference type="KEGG" id="mmu:24012"/>
<dbReference type="UCSC" id="uc007dtk.2">
    <property type="organism name" value="mouse"/>
</dbReference>
<dbReference type="AGR" id="MGI:1346089"/>
<dbReference type="CTD" id="6000"/>
<dbReference type="MGI" id="MGI:1346089">
    <property type="gene designation" value="Rgs7"/>
</dbReference>
<dbReference type="VEuPathDB" id="HostDB:ENSMUSG00000026527"/>
<dbReference type="eggNOG" id="KOG3589">
    <property type="taxonomic scope" value="Eukaryota"/>
</dbReference>
<dbReference type="GeneTree" id="ENSGT00940000156661"/>
<dbReference type="InParanoid" id="O54829"/>
<dbReference type="OrthoDB" id="196547at2759"/>
<dbReference type="PhylomeDB" id="O54829"/>
<dbReference type="TreeFam" id="TF351956"/>
<dbReference type="Reactome" id="R-MMU-418594">
    <property type="pathway name" value="G alpha (i) signalling events"/>
</dbReference>
<dbReference type="Reactome" id="R-MMU-6814122">
    <property type="pathway name" value="Cooperation of PDCL (PhLP1) and TRiC/CCT in G-protein beta folding"/>
</dbReference>
<dbReference type="BioGRID-ORCS" id="24012">
    <property type="hits" value="0 hits in 77 CRISPR screens"/>
</dbReference>
<dbReference type="CD-CODE" id="CE726F99">
    <property type="entry name" value="Postsynaptic density"/>
</dbReference>
<dbReference type="ChiTaRS" id="Rgs7">
    <property type="organism name" value="mouse"/>
</dbReference>
<dbReference type="PRO" id="PR:O54829"/>
<dbReference type="Proteomes" id="UP000000589">
    <property type="component" value="Chromosome 1"/>
</dbReference>
<dbReference type="RNAct" id="O54829">
    <property type="molecule type" value="protein"/>
</dbReference>
<dbReference type="Bgee" id="ENSMUSG00000026527">
    <property type="expression patterns" value="Expressed in facial nucleus and 148 other cell types or tissues"/>
</dbReference>
<dbReference type="ExpressionAtlas" id="O54829">
    <property type="expression patterns" value="baseline and differential"/>
</dbReference>
<dbReference type="GO" id="GO:0051286">
    <property type="term" value="C:cell tip"/>
    <property type="evidence" value="ECO:0000314"/>
    <property type="project" value="MGI"/>
</dbReference>
<dbReference type="GO" id="GO:0005829">
    <property type="term" value="C:cytosol"/>
    <property type="evidence" value="ECO:0007669"/>
    <property type="project" value="UniProtKB-SubCell"/>
</dbReference>
<dbReference type="GO" id="GO:0030425">
    <property type="term" value="C:dendrite"/>
    <property type="evidence" value="ECO:0000314"/>
    <property type="project" value="MGI"/>
</dbReference>
<dbReference type="GO" id="GO:0044292">
    <property type="term" value="C:dendrite terminus"/>
    <property type="evidence" value="ECO:0000314"/>
    <property type="project" value="MGI"/>
</dbReference>
<dbReference type="GO" id="GO:0098978">
    <property type="term" value="C:glutamatergic synapse"/>
    <property type="evidence" value="ECO:0000314"/>
    <property type="project" value="SynGO"/>
</dbReference>
<dbReference type="GO" id="GO:0005634">
    <property type="term" value="C:nucleus"/>
    <property type="evidence" value="ECO:0000314"/>
    <property type="project" value="MGI"/>
</dbReference>
<dbReference type="GO" id="GO:0005886">
    <property type="term" value="C:plasma membrane"/>
    <property type="evidence" value="ECO:0000314"/>
    <property type="project" value="MGI"/>
</dbReference>
<dbReference type="GO" id="GO:0045211">
    <property type="term" value="C:postsynaptic membrane"/>
    <property type="evidence" value="ECO:0000314"/>
    <property type="project" value="SynGO"/>
</dbReference>
<dbReference type="GO" id="GO:0098793">
    <property type="term" value="C:presynapse"/>
    <property type="evidence" value="ECO:0000314"/>
    <property type="project" value="SynGO"/>
</dbReference>
<dbReference type="GO" id="GO:0042734">
    <property type="term" value="C:presynaptic membrane"/>
    <property type="evidence" value="ECO:0000314"/>
    <property type="project" value="SynGO"/>
</dbReference>
<dbReference type="GO" id="GO:0001965">
    <property type="term" value="F:G-protein alpha-subunit binding"/>
    <property type="evidence" value="ECO:0000250"/>
    <property type="project" value="UniProtKB"/>
</dbReference>
<dbReference type="GO" id="GO:0031681">
    <property type="term" value="F:G-protein beta-subunit binding"/>
    <property type="evidence" value="ECO:0007669"/>
    <property type="project" value="Ensembl"/>
</dbReference>
<dbReference type="GO" id="GO:0005096">
    <property type="term" value="F:GTPase activator activity"/>
    <property type="evidence" value="ECO:0000314"/>
    <property type="project" value="UniProtKB"/>
</dbReference>
<dbReference type="GO" id="GO:0007186">
    <property type="term" value="P:G protein-coupled receptor signaling pathway"/>
    <property type="evidence" value="ECO:0000314"/>
    <property type="project" value="UniProtKB"/>
</dbReference>
<dbReference type="GO" id="GO:0035556">
    <property type="term" value="P:intracellular signal transduction"/>
    <property type="evidence" value="ECO:0007669"/>
    <property type="project" value="InterPro"/>
</dbReference>
<dbReference type="GO" id="GO:0045744">
    <property type="term" value="P:negative regulation of G protein-coupled receptor signaling pathway"/>
    <property type="evidence" value="ECO:0000250"/>
    <property type="project" value="UniProtKB"/>
</dbReference>
<dbReference type="GO" id="GO:0008277">
    <property type="term" value="P:regulation of G protein-coupled receptor signaling pathway"/>
    <property type="evidence" value="ECO:0000314"/>
    <property type="project" value="MGI"/>
</dbReference>
<dbReference type="GO" id="GO:0060078">
    <property type="term" value="P:regulation of postsynaptic membrane potential"/>
    <property type="evidence" value="ECO:0000314"/>
    <property type="project" value="SynGO"/>
</dbReference>
<dbReference type="CDD" id="cd04450">
    <property type="entry name" value="DEP_RGS7-like"/>
    <property type="match status" value="1"/>
</dbReference>
<dbReference type="CDD" id="cd00068">
    <property type="entry name" value="GGL"/>
    <property type="match status" value="1"/>
</dbReference>
<dbReference type="CDD" id="cd08738">
    <property type="entry name" value="RGS_RGS7"/>
    <property type="match status" value="1"/>
</dbReference>
<dbReference type="FunFam" id="1.10.10.10:FF:000162">
    <property type="entry name" value="Regulator of G-protein signaling 6"/>
    <property type="match status" value="1"/>
</dbReference>
<dbReference type="FunFam" id="1.10.1240.60:FF:000001">
    <property type="entry name" value="Regulator of G-protein signaling 6"/>
    <property type="match status" value="1"/>
</dbReference>
<dbReference type="FunFam" id="4.10.260.10:FF:000002">
    <property type="entry name" value="Regulator of G-protein signaling 6"/>
    <property type="match status" value="1"/>
</dbReference>
<dbReference type="FunFam" id="1.10.167.10:FF:000002">
    <property type="entry name" value="Regulator of G-protein signaling 6 isoform 9"/>
    <property type="match status" value="1"/>
</dbReference>
<dbReference type="Gene3D" id="1.10.1240.60">
    <property type="match status" value="1"/>
</dbReference>
<dbReference type="Gene3D" id="1.10.167.10">
    <property type="entry name" value="Regulator of G-protein Signalling 4, domain 2"/>
    <property type="match status" value="1"/>
</dbReference>
<dbReference type="Gene3D" id="4.10.260.10">
    <property type="entry name" value="Transducin (heterotrimeric G protein), gamma chain"/>
    <property type="match status" value="1"/>
</dbReference>
<dbReference type="Gene3D" id="1.10.10.10">
    <property type="entry name" value="Winged helix-like DNA-binding domain superfamily/Winged helix DNA-binding domain"/>
    <property type="match status" value="1"/>
</dbReference>
<dbReference type="InterPro" id="IPR000591">
    <property type="entry name" value="DEP_dom"/>
</dbReference>
<dbReference type="InterPro" id="IPR015898">
    <property type="entry name" value="G-protein_gamma-like_dom"/>
</dbReference>
<dbReference type="InterPro" id="IPR036284">
    <property type="entry name" value="GGL_sf"/>
</dbReference>
<dbReference type="InterPro" id="IPR016137">
    <property type="entry name" value="RGS"/>
</dbReference>
<dbReference type="InterPro" id="IPR047016">
    <property type="entry name" value="RGS6/7/9/11"/>
</dbReference>
<dbReference type="InterPro" id="IPR047017">
    <property type="entry name" value="RGS6/7/9/11_DHEX_sf"/>
</dbReference>
<dbReference type="InterPro" id="IPR040759">
    <property type="entry name" value="RGS_DHEX"/>
</dbReference>
<dbReference type="InterPro" id="IPR036305">
    <property type="entry name" value="RGS_sf"/>
</dbReference>
<dbReference type="InterPro" id="IPR044926">
    <property type="entry name" value="RGS_subdomain_2"/>
</dbReference>
<dbReference type="InterPro" id="IPR036388">
    <property type="entry name" value="WH-like_DNA-bd_sf"/>
</dbReference>
<dbReference type="InterPro" id="IPR036390">
    <property type="entry name" value="WH_DNA-bd_sf"/>
</dbReference>
<dbReference type="PANTHER" id="PTHR45746">
    <property type="entry name" value="LP21163P"/>
    <property type="match status" value="1"/>
</dbReference>
<dbReference type="PANTHER" id="PTHR45746:SF7">
    <property type="entry name" value="REGULATOR OF G-PROTEIN SIGNALING 7"/>
    <property type="match status" value="1"/>
</dbReference>
<dbReference type="Pfam" id="PF00610">
    <property type="entry name" value="DEP"/>
    <property type="match status" value="1"/>
</dbReference>
<dbReference type="Pfam" id="PF00631">
    <property type="entry name" value="G-gamma"/>
    <property type="match status" value="1"/>
</dbReference>
<dbReference type="Pfam" id="PF00615">
    <property type="entry name" value="RGS"/>
    <property type="match status" value="1"/>
</dbReference>
<dbReference type="Pfam" id="PF18148">
    <property type="entry name" value="RGS_DHEX"/>
    <property type="match status" value="1"/>
</dbReference>
<dbReference type="PRINTS" id="PR01301">
    <property type="entry name" value="RGSPROTEIN"/>
</dbReference>
<dbReference type="SMART" id="SM00049">
    <property type="entry name" value="DEP"/>
    <property type="match status" value="1"/>
</dbReference>
<dbReference type="SMART" id="SM01224">
    <property type="entry name" value="G_gamma"/>
    <property type="match status" value="1"/>
</dbReference>
<dbReference type="SMART" id="SM00224">
    <property type="entry name" value="GGL"/>
    <property type="match status" value="1"/>
</dbReference>
<dbReference type="SMART" id="SM00315">
    <property type="entry name" value="RGS"/>
    <property type="match status" value="1"/>
</dbReference>
<dbReference type="SUPFAM" id="SSF48097">
    <property type="entry name" value="Regulator of G-protein signaling, RGS"/>
    <property type="match status" value="1"/>
</dbReference>
<dbReference type="SUPFAM" id="SSF48670">
    <property type="entry name" value="Transducin (heterotrimeric G protein), gamma chain"/>
    <property type="match status" value="1"/>
</dbReference>
<dbReference type="SUPFAM" id="SSF46785">
    <property type="entry name" value="Winged helix' DNA-binding domain"/>
    <property type="match status" value="1"/>
</dbReference>
<dbReference type="PROSITE" id="PS50186">
    <property type="entry name" value="DEP"/>
    <property type="match status" value="1"/>
</dbReference>
<dbReference type="PROSITE" id="PS50132">
    <property type="entry name" value="RGS"/>
    <property type="match status" value="1"/>
</dbReference>
<accession>O54829</accession>
<accession>E9QLB9</accession>
<sequence>MAQGNNYGQTSNGVADESPNMLVYRKMEDVIARMQDEKNGIPIRTVKSFLSKIPSVFSGSDIVQWLIKNLTIEDPVEALHLGTLMAAHGYFFPISDHVLTLKDDGTFYRFQTPYFWPSNCWEPENTDYAVYLCKRTMQNKARLELADYEAESLARLQRAFARKWEFIFMQAEAQAKVDKKRDKIERKILDSQERAFWDVHRPVPGCVNTTEVDIKKSSRMRNPHKTRKSVYGLQNDIRSHSPTHTPTPETKPPTEDELHQQIKYWQIQLDRHRLKMSKVADSLLSYTEQYVEYDPFLVPPDPSNPWLSDDTTFWELEASKEPSQQRVKRWGFGMDEALKDPVGREQFLKFLESEFSSENLRFWLAVEDLKRRPIREVPSRVQEIWQEFLAPGAPSAINLDSKSYDKTTQNVKEPGRYTFEDAQEHIYKLMKSDSYPRFIRSSAYQELLQAKRKGKTLTSKRLTSLVQSY</sequence>
<name>RGS7_MOUSE</name>
<feature type="chain" id="PRO_0000204197" description="Regulator of G-protein signaling 7">
    <location>
        <begin position="1"/>
        <end position="469"/>
    </location>
</feature>
<feature type="domain" description="DEP" evidence="4">
    <location>
        <begin position="37"/>
        <end position="112"/>
    </location>
</feature>
<feature type="domain" description="G protein gamma">
    <location>
        <begin position="255"/>
        <end position="316"/>
    </location>
</feature>
<feature type="domain" description="RGS" evidence="5">
    <location>
        <begin position="333"/>
        <end position="448"/>
    </location>
</feature>
<feature type="region of interest" description="Disordered" evidence="6">
    <location>
        <begin position="236"/>
        <end position="255"/>
    </location>
</feature>
<feature type="modified residue" description="Phosphoserine" evidence="3">
    <location>
        <position position="229"/>
    </location>
</feature>
<feature type="modified residue" description="Phosphoserine" evidence="15">
    <location>
        <position position="241"/>
    </location>
</feature>
<feature type="modified residue" description="Phosphothreonine" evidence="15">
    <location>
        <position position="243"/>
    </location>
</feature>
<feature type="modified residue" description="Phosphoserine" evidence="2">
    <location>
        <position position="434"/>
    </location>
</feature>
<feature type="sequence conflict" description="In Ref. 1; AAC99483." evidence="14" ref="1">
    <original>R</original>
    <variation>S</variation>
    <location>
        <position position="461"/>
    </location>
</feature>
<keyword id="KW-1003">Cell membrane</keyword>
<keyword id="KW-0963">Cytoplasm</keyword>
<keyword id="KW-0343">GTPase activation</keyword>
<keyword id="KW-0449">Lipoprotein</keyword>
<keyword id="KW-0472">Membrane</keyword>
<keyword id="KW-0564">Palmitate</keyword>
<keyword id="KW-0597">Phosphoprotein</keyword>
<keyword id="KW-1185">Reference proteome</keyword>
<keyword id="KW-0734">Signal transduction inhibitor</keyword>
<keyword id="KW-0832">Ubl conjugation</keyword>
<comment type="function">
    <text evidence="2 11 12 13">GTPase activator component of the RGS7-GNB5 complex that regulates G protein-coupled receptor signaling cascades (PubMed:25792749). The RGS7-GNB5 complex acts as an inhibitor signal transduction by promoting the GTPase activity of G protein alpha subunits, such as GNAO1, thereby driving them into their inactive GDP-bound form (By similarity). May play a role in synaptic vesicle exocytosis (By similarity). Glycine-dependent regulation of the RGS7-GNB5 complex by GPR158 affects mood and cognition via its ability to regulate neuronal excitability in L2/L3 pyramidal neurons of the prefrontal cortex (PubMed:30546127, PubMed:31311860). Modulates the activity of potassium channels that are activated by GNAO1 in response to muscarinic acetylcholine receptor M2/CHRM2 signaling (By similarity).</text>
</comment>
<comment type="subunit">
    <text evidence="2 3 7 8 9 10 11 13">Interacts with GNB5, forming the RGS7-GNB5 complex (By similarity). Interacts with GPR158; promotes the GTPase activator activity of the RGS7-GNB5 complex in absence of glycine, in contrast GTPase activator activity of the RGS7-GNB5 complex is inhibited in presence of glycine (PubMed:22689652, PubMed:25792749, PubMed:31311860). Interacts with GPR179 (PubMed:22689652). Interacts with PKD1; this prevents rapid proteasomal degradation (By similarity). Interacts with RGS7BP, leading to regulate the subcellular location of the heterodimer formed with GNB5 (PubMed:15632198, PubMed:15897264). Interacts (phosphorylated form) with 14-3-3 protein YWHAQ (PubMed:10862767). Interacts with SNAPIN (By similarity). Interacts with GNAI1 (By similarity). Interacts with GNAO1, GNAI3 and GNAZ (By similarity).</text>
</comment>
<comment type="subcellular location">
    <subcellularLocation>
        <location evidence="2">Cytoplasm</location>
        <location evidence="2">Cytosol</location>
    </subcellularLocation>
    <subcellularLocation>
        <location evidence="2">Cytoplasm</location>
    </subcellularLocation>
    <subcellularLocation>
        <location evidence="10 11 12">Cell membrane</location>
    </subcellularLocation>
    <subcellularLocation>
        <location evidence="2">Membrane</location>
        <topology evidence="2">Peripheral membrane protein</topology>
        <orientation evidence="2">Cytoplasmic side</orientation>
    </subcellularLocation>
    <text evidence="2">Interaction with PKD1 promotes location at the cell membrane. Interaction with RGS7BP promotes location at the cell membrane.</text>
</comment>
<comment type="tissue specificity">
    <text evidence="7">Detected in brain (at protein level).</text>
</comment>
<comment type="PTM">
    <text evidence="1">Palmitoylated.</text>
</comment>
<comment type="PTM">
    <text evidence="2">Ubiquitinated, leading to rapid proteasomal degradation.</text>
</comment>
<comment type="PTM">
    <text evidence="2">Phosphorylation and subsequent interaction with 14-3-3 proteins inhibits GAP activity.</text>
</comment>
<evidence type="ECO:0000250" key="1">
    <source>
        <dbReference type="UniProtKB" id="O46470"/>
    </source>
</evidence>
<evidence type="ECO:0000250" key="2">
    <source>
        <dbReference type="UniProtKB" id="P49802"/>
    </source>
</evidence>
<evidence type="ECO:0000250" key="3">
    <source>
        <dbReference type="UniProtKB" id="P49803"/>
    </source>
</evidence>
<evidence type="ECO:0000255" key="4">
    <source>
        <dbReference type="PROSITE-ProRule" id="PRU00066"/>
    </source>
</evidence>
<evidence type="ECO:0000255" key="5">
    <source>
        <dbReference type="PROSITE-ProRule" id="PRU00171"/>
    </source>
</evidence>
<evidence type="ECO:0000256" key="6">
    <source>
        <dbReference type="SAM" id="MobiDB-lite"/>
    </source>
</evidence>
<evidence type="ECO:0000269" key="7">
    <source>
    </source>
</evidence>
<evidence type="ECO:0000269" key="8">
    <source>
    </source>
</evidence>
<evidence type="ECO:0000269" key="9">
    <source>
    </source>
</evidence>
<evidence type="ECO:0000269" key="10">
    <source>
    </source>
</evidence>
<evidence type="ECO:0000269" key="11">
    <source>
    </source>
</evidence>
<evidence type="ECO:0000269" key="12">
    <source>
    </source>
</evidence>
<evidence type="ECO:0000269" key="13">
    <source>
    </source>
</evidence>
<evidence type="ECO:0000305" key="14"/>
<evidence type="ECO:0007744" key="15">
    <source>
    </source>
</evidence>
<gene>
    <name type="primary">Rgs7</name>
</gene>
<organism>
    <name type="scientific">Mus musculus</name>
    <name type="common">Mouse</name>
    <dbReference type="NCBI Taxonomy" id="10090"/>
    <lineage>
        <taxon>Eukaryota</taxon>
        <taxon>Metazoa</taxon>
        <taxon>Chordata</taxon>
        <taxon>Craniata</taxon>
        <taxon>Vertebrata</taxon>
        <taxon>Euteleostomi</taxon>
        <taxon>Mammalia</taxon>
        <taxon>Eutheria</taxon>
        <taxon>Euarchontoglires</taxon>
        <taxon>Glires</taxon>
        <taxon>Rodentia</taxon>
        <taxon>Myomorpha</taxon>
        <taxon>Muroidea</taxon>
        <taxon>Muridae</taxon>
        <taxon>Murinae</taxon>
        <taxon>Mus</taxon>
        <taxon>Mus</taxon>
    </lineage>
</organism>
<reference key="1">
    <citation type="journal article" date="1998" name="Neuron">
        <title>RGS9, a GTPase accelerator for phototransduction.</title>
        <authorList>
            <person name="He W."/>
            <person name="Cowan C.W."/>
            <person name="Wensel T.G."/>
        </authorList>
    </citation>
    <scope>NUCLEOTIDE SEQUENCE [MRNA]</scope>
</reference>
<reference key="2">
    <citation type="journal article" date="2009" name="PLoS Biol.">
        <title>Lineage-specific biology revealed by a finished genome assembly of the mouse.</title>
        <authorList>
            <person name="Church D.M."/>
            <person name="Goodstadt L."/>
            <person name="Hillier L.W."/>
            <person name="Zody M.C."/>
            <person name="Goldstein S."/>
            <person name="She X."/>
            <person name="Bult C.J."/>
            <person name="Agarwala R."/>
            <person name="Cherry J.L."/>
            <person name="DiCuccio M."/>
            <person name="Hlavina W."/>
            <person name="Kapustin Y."/>
            <person name="Meric P."/>
            <person name="Maglott D."/>
            <person name="Birtle Z."/>
            <person name="Marques A.C."/>
            <person name="Graves T."/>
            <person name="Zhou S."/>
            <person name="Teague B."/>
            <person name="Potamousis K."/>
            <person name="Churas C."/>
            <person name="Place M."/>
            <person name="Herschleb J."/>
            <person name="Runnheim R."/>
            <person name="Forrest D."/>
            <person name="Amos-Landgraf J."/>
            <person name="Schwartz D.C."/>
            <person name="Cheng Z."/>
            <person name="Lindblad-Toh K."/>
            <person name="Eichler E.E."/>
            <person name="Ponting C.P."/>
        </authorList>
    </citation>
    <scope>NUCLEOTIDE SEQUENCE [LARGE SCALE GENOMIC DNA]</scope>
    <source>
        <strain>C57BL/6J</strain>
    </source>
</reference>
<reference key="3">
    <citation type="journal article" date="2000" name="J. Biol. Chem.">
        <title>14-3-3 interacts with regulator of G protein signaling proteins and modulates their activity.</title>
        <authorList>
            <person name="Benzing T."/>
            <person name="Yaffe M.B."/>
            <person name="Arnould T."/>
            <person name="Sellin L."/>
            <person name="Schermer B."/>
            <person name="Schilling B."/>
            <person name="Schreiber R."/>
            <person name="Kunzelmann K."/>
            <person name="Leparc G.G."/>
            <person name="Kim E."/>
            <person name="Walz G."/>
        </authorList>
    </citation>
    <scope>INTERACTION WITH 14-3-3 PROTEIN YWHAQ</scope>
    <scope>TISSUE SPECIFICITY</scope>
</reference>
<reference key="4">
    <citation type="journal article" date="2005" name="J. Biol. Chem.">
        <title>R7BP, a novel neuronal protein interacting with RGS proteins of the R7 family.</title>
        <authorList>
            <person name="Martemyanov K.A."/>
            <person name="Yoo P.J."/>
            <person name="Skiba N.P."/>
            <person name="Arshavsky V.Y."/>
        </authorList>
    </citation>
    <scope>INTERACTION WITH RGS7BP</scope>
</reference>
<reference key="5">
    <citation type="journal article" date="2005" name="J. Cell Biol.">
        <title>Palmitoylation regulates plasma membrane-nuclear shuttling of R7BP, a novel membrane anchor for the RGS7 family.</title>
        <authorList>
            <person name="Drenan R.M."/>
            <person name="Doupnik C.A."/>
            <person name="Boyle M.P."/>
            <person name="Muglia L.J."/>
            <person name="Huettner J.E."/>
            <person name="Linder M.E."/>
            <person name="Blumer K.J."/>
        </authorList>
    </citation>
    <scope>INTERACTION WITH RGS7BP</scope>
</reference>
<reference key="6">
    <citation type="journal article" date="2010" name="Cell">
        <title>A tissue-specific atlas of mouse protein phosphorylation and expression.</title>
        <authorList>
            <person name="Huttlin E.L."/>
            <person name="Jedrychowski M.P."/>
            <person name="Elias J.E."/>
            <person name="Goswami T."/>
            <person name="Rad R."/>
            <person name="Beausoleil S.A."/>
            <person name="Villen J."/>
            <person name="Haas W."/>
            <person name="Sowa M.E."/>
            <person name="Gygi S.P."/>
        </authorList>
    </citation>
    <scope>PHOSPHORYLATION [LARGE SCALE ANALYSIS] AT SER-241 AND THR-243</scope>
    <scope>IDENTIFICATION BY MASS SPECTROMETRY [LARGE SCALE ANALYSIS]</scope>
    <source>
        <tissue>Brain</tissue>
    </source>
</reference>
<reference key="7">
    <citation type="journal article" date="2012" name="J. Cell Biol.">
        <title>GPR158/179 regulate G protein signaling by controlling localization and activity of the RGS7 complexes.</title>
        <authorList>
            <person name="Orlandi C."/>
            <person name="Posokhova E."/>
            <person name="Masuho I."/>
            <person name="Ray T.A."/>
            <person name="Hasan N."/>
            <person name="Gregg R.G."/>
            <person name="Martemyanov K.A."/>
        </authorList>
    </citation>
    <scope>SUBCELLULAR LOCATION</scope>
    <scope>INTERACTION WITH GPR158 AND GPR179</scope>
</reference>
<reference key="8">
    <citation type="journal article" date="2015" name="J. Biol. Chem.">
        <title>Orphan Receptor GPR158 Is an Allosteric Modulator of RGS7 Catalytic Activity with an Essential Role in Dictating Its Expression and Localization in the Brain.</title>
        <authorList>
            <person name="Orlandi C."/>
            <person name="Xie K."/>
            <person name="Masuho I."/>
            <person name="Fajardo-Serrano A."/>
            <person name="Lujan R."/>
            <person name="Martemyanov K.A."/>
        </authorList>
    </citation>
    <scope>FUNCTION</scope>
    <scope>SUBCELLULAR LOCATION</scope>
    <scope>INTERACTION WITH GPR158</scope>
</reference>
<reference key="9">
    <citation type="journal article" date="2019" name="J. Biol. Chem.">
        <title>The signaling proteins GPR158 and RGS7 modulate excitability of L2/3 pyramidal neurons and control A-type potassium channel in the prelimbic cortex.</title>
        <authorList>
            <person name="Song C."/>
            <person name="Orlandi C."/>
            <person name="Sutton L.P."/>
            <person name="Martemyanov K.A."/>
        </authorList>
    </citation>
    <scope>FUNCTION</scope>
    <scope>INTERACTION WITH GPR158</scope>
</reference>
<reference key="10">
    <citation type="journal article" date="2019" name="Neuropsychopharmacology">
        <title>Homeostatic cAMP regulation by the RGS7 complex controls depression-related behaviors.</title>
        <authorList>
            <person name="Orlandi C."/>
            <person name="Sutton L.P."/>
            <person name="Muntean B.S."/>
            <person name="Song C."/>
            <person name="Martemyanov K.A."/>
        </authorList>
    </citation>
    <scope>FUNCTION</scope>
    <scope>SUBCELLULAR LOCATION</scope>
</reference>
<protein>
    <recommendedName>
        <fullName>Regulator of G-protein signaling 7</fullName>
        <shortName>RGS7</shortName>
    </recommendedName>
</protein>
<proteinExistence type="evidence at protein level"/>